<dbReference type="EC" id="3.5.1.2" evidence="1"/>
<dbReference type="EMBL" id="CP000764">
    <property type="protein sequence ID" value="ABS20781.1"/>
    <property type="molecule type" value="Genomic_DNA"/>
</dbReference>
<dbReference type="RefSeq" id="WP_011983538.1">
    <property type="nucleotide sequence ID" value="NC_009674.1"/>
</dbReference>
<dbReference type="SMR" id="A7GKX3"/>
<dbReference type="STRING" id="315749.Bcer98_0426"/>
<dbReference type="GeneID" id="33895774"/>
<dbReference type="KEGG" id="bcy:Bcer98_0426"/>
<dbReference type="eggNOG" id="COG2066">
    <property type="taxonomic scope" value="Bacteria"/>
</dbReference>
<dbReference type="HOGENOM" id="CLU_027932_1_0_9"/>
<dbReference type="OrthoDB" id="9788822at2"/>
<dbReference type="Proteomes" id="UP000002300">
    <property type="component" value="Chromosome"/>
</dbReference>
<dbReference type="GO" id="GO:0004359">
    <property type="term" value="F:glutaminase activity"/>
    <property type="evidence" value="ECO:0007669"/>
    <property type="project" value="UniProtKB-UniRule"/>
</dbReference>
<dbReference type="GO" id="GO:0006537">
    <property type="term" value="P:glutamate biosynthetic process"/>
    <property type="evidence" value="ECO:0007669"/>
    <property type="project" value="TreeGrafter"/>
</dbReference>
<dbReference type="GO" id="GO:0006543">
    <property type="term" value="P:glutamine catabolic process"/>
    <property type="evidence" value="ECO:0007669"/>
    <property type="project" value="TreeGrafter"/>
</dbReference>
<dbReference type="FunFam" id="1.10.1500.10:FF:000001">
    <property type="entry name" value="Glutaminase"/>
    <property type="match status" value="1"/>
</dbReference>
<dbReference type="FunFam" id="3.40.710.10:FF:000005">
    <property type="entry name" value="Glutaminase"/>
    <property type="match status" value="1"/>
</dbReference>
<dbReference type="Gene3D" id="1.10.1500.10">
    <property type="match status" value="1"/>
</dbReference>
<dbReference type="Gene3D" id="3.40.710.10">
    <property type="entry name" value="DD-peptidase/beta-lactamase superfamily"/>
    <property type="match status" value="1"/>
</dbReference>
<dbReference type="HAMAP" id="MF_00313">
    <property type="entry name" value="Glutaminase"/>
    <property type="match status" value="1"/>
</dbReference>
<dbReference type="InterPro" id="IPR012338">
    <property type="entry name" value="Beta-lactam/transpept-like"/>
</dbReference>
<dbReference type="InterPro" id="IPR015868">
    <property type="entry name" value="Glutaminase"/>
</dbReference>
<dbReference type="NCBIfam" id="TIGR03814">
    <property type="entry name" value="Gln_ase"/>
    <property type="match status" value="1"/>
</dbReference>
<dbReference type="PANTHER" id="PTHR12544">
    <property type="entry name" value="GLUTAMINASE"/>
    <property type="match status" value="1"/>
</dbReference>
<dbReference type="PANTHER" id="PTHR12544:SF29">
    <property type="entry name" value="GLUTAMINASE"/>
    <property type="match status" value="1"/>
</dbReference>
<dbReference type="Pfam" id="PF04960">
    <property type="entry name" value="Glutaminase"/>
    <property type="match status" value="1"/>
</dbReference>
<dbReference type="SUPFAM" id="SSF56601">
    <property type="entry name" value="beta-lactamase/transpeptidase-like"/>
    <property type="match status" value="1"/>
</dbReference>
<gene>
    <name evidence="1" type="primary">glsA</name>
    <name type="ordered locus">Bcer98_0426</name>
</gene>
<evidence type="ECO:0000255" key="1">
    <source>
        <dbReference type="HAMAP-Rule" id="MF_00313"/>
    </source>
</evidence>
<organism>
    <name type="scientific">Bacillus cytotoxicus (strain DSM 22905 / CIP 110041 / 391-98 / NVH 391-98)</name>
    <dbReference type="NCBI Taxonomy" id="315749"/>
    <lineage>
        <taxon>Bacteria</taxon>
        <taxon>Bacillati</taxon>
        <taxon>Bacillota</taxon>
        <taxon>Bacilli</taxon>
        <taxon>Bacillales</taxon>
        <taxon>Bacillaceae</taxon>
        <taxon>Bacillus</taxon>
        <taxon>Bacillus cereus group</taxon>
    </lineage>
</organism>
<name>GLSA_BACCN</name>
<feature type="chain" id="PRO_1000079070" description="Glutaminase">
    <location>
        <begin position="1"/>
        <end position="309"/>
    </location>
</feature>
<feature type="binding site" evidence="1">
    <location>
        <position position="65"/>
    </location>
    <ligand>
        <name>substrate</name>
    </ligand>
</feature>
<feature type="binding site" evidence="1">
    <location>
        <position position="117"/>
    </location>
    <ligand>
        <name>substrate</name>
    </ligand>
</feature>
<feature type="binding site" evidence="1">
    <location>
        <position position="162"/>
    </location>
    <ligand>
        <name>substrate</name>
    </ligand>
</feature>
<feature type="binding site" evidence="1">
    <location>
        <position position="169"/>
    </location>
    <ligand>
        <name>substrate</name>
    </ligand>
</feature>
<feature type="binding site" evidence="1">
    <location>
        <position position="193"/>
    </location>
    <ligand>
        <name>substrate</name>
    </ligand>
</feature>
<feature type="binding site" evidence="1">
    <location>
        <position position="245"/>
    </location>
    <ligand>
        <name>substrate</name>
    </ligand>
</feature>
<feature type="binding site" evidence="1">
    <location>
        <position position="263"/>
    </location>
    <ligand>
        <name>substrate</name>
    </ligand>
</feature>
<keyword id="KW-0378">Hydrolase</keyword>
<proteinExistence type="inferred from homology"/>
<reference key="1">
    <citation type="journal article" date="2008" name="Chem. Biol. Interact.">
        <title>Extending the Bacillus cereus group genomics to putative food-borne pathogens of different toxicity.</title>
        <authorList>
            <person name="Lapidus A."/>
            <person name="Goltsman E."/>
            <person name="Auger S."/>
            <person name="Galleron N."/>
            <person name="Segurens B."/>
            <person name="Dossat C."/>
            <person name="Land M.L."/>
            <person name="Broussolle V."/>
            <person name="Brillard J."/>
            <person name="Guinebretiere M.-H."/>
            <person name="Sanchis V."/>
            <person name="Nguen-the C."/>
            <person name="Lereclus D."/>
            <person name="Richardson P."/>
            <person name="Wincker P."/>
            <person name="Weissenbach J."/>
            <person name="Ehrlich S.D."/>
            <person name="Sorokin A."/>
        </authorList>
    </citation>
    <scope>NUCLEOTIDE SEQUENCE [LARGE SCALE GENOMIC DNA]</scope>
    <source>
        <strain>DSM 22905 / CIP 110041 / 391-98 / NVH 391-98</strain>
    </source>
</reference>
<protein>
    <recommendedName>
        <fullName evidence="1">Glutaminase</fullName>
        <ecNumber evidence="1">3.5.1.2</ecNumber>
    </recommendedName>
</protein>
<sequence>MQCVETNNLKQLLEQVKPYTKKGKLATYIPELGNANPDDLGIAIYHKETEYVHAGSSQMLFTLQSISKVITLALALLDRGEEYVFSKVGMEPTGDPFNSIIKLETTSPSKPLNPMINAGALAITSMLKGANNEEKIERILNFVREITDNPTIHYSAKVATSELETAYLNRSLCYYMKQNGIIDNDIEELMDLYTRQCAIEVNCIDLARIGLIFAMDGYDPYKQKQIIPKHITKICKTFMVTCGMYNESGEFAIRVGIPAKSGVAGGIFGCVKGEMGIGIFGPALDENGNSIAGFKILELLSAQEGWSIF</sequence>
<accession>A7GKX3</accession>
<comment type="catalytic activity">
    <reaction evidence="1">
        <text>L-glutamine + H2O = L-glutamate + NH4(+)</text>
        <dbReference type="Rhea" id="RHEA:15889"/>
        <dbReference type="ChEBI" id="CHEBI:15377"/>
        <dbReference type="ChEBI" id="CHEBI:28938"/>
        <dbReference type="ChEBI" id="CHEBI:29985"/>
        <dbReference type="ChEBI" id="CHEBI:58359"/>
        <dbReference type="EC" id="3.5.1.2"/>
    </reaction>
</comment>
<comment type="subunit">
    <text evidence="1">Homotetramer.</text>
</comment>
<comment type="similarity">
    <text evidence="1">Belongs to the glutaminase family.</text>
</comment>